<reference key="1">
    <citation type="journal article" date="2001" name="Nature">
        <title>Complete genome sequence of Salmonella enterica serovar Typhimurium LT2.</title>
        <authorList>
            <person name="McClelland M."/>
            <person name="Sanderson K.E."/>
            <person name="Spieth J."/>
            <person name="Clifton S.W."/>
            <person name="Latreille P."/>
            <person name="Courtney L."/>
            <person name="Porwollik S."/>
            <person name="Ali J."/>
            <person name="Dante M."/>
            <person name="Du F."/>
            <person name="Hou S."/>
            <person name="Layman D."/>
            <person name="Leonard S."/>
            <person name="Nguyen C."/>
            <person name="Scott K."/>
            <person name="Holmes A."/>
            <person name="Grewal N."/>
            <person name="Mulvaney E."/>
            <person name="Ryan E."/>
            <person name="Sun H."/>
            <person name="Florea L."/>
            <person name="Miller W."/>
            <person name="Stoneking T."/>
            <person name="Nhan M."/>
            <person name="Waterston R."/>
            <person name="Wilson R.K."/>
        </authorList>
    </citation>
    <scope>NUCLEOTIDE SEQUENCE [LARGE SCALE GENOMIC DNA]</scope>
    <source>
        <strain>LT2 / SGSC1412 / ATCC 700720</strain>
    </source>
</reference>
<dbReference type="EC" id="2.1.1.298" evidence="1"/>
<dbReference type="EMBL" id="AE006468">
    <property type="protein sequence ID" value="AAL21286.1"/>
    <property type="molecule type" value="Genomic_DNA"/>
</dbReference>
<dbReference type="EMBL" id="M27715">
    <property type="status" value="NOT_ANNOTATED_CDS"/>
    <property type="molecule type" value="Genomic_DNA"/>
</dbReference>
<dbReference type="RefSeq" id="NP_461327.1">
    <property type="nucleotide sequence ID" value="NC_003197.2"/>
</dbReference>
<dbReference type="RefSeq" id="WP_001542329.1">
    <property type="nucleotide sequence ID" value="NC_003197.2"/>
</dbReference>
<dbReference type="SMR" id="P0A293"/>
<dbReference type="STRING" id="99287.STM2385"/>
<dbReference type="PaxDb" id="99287-STM2385"/>
<dbReference type="GeneID" id="1253907"/>
<dbReference type="KEGG" id="stm:STM2385"/>
<dbReference type="PATRIC" id="fig|99287.12.peg.2524"/>
<dbReference type="HOGENOM" id="CLU_018398_5_1_6"/>
<dbReference type="OMA" id="IYYGHGT"/>
<dbReference type="PhylomeDB" id="P0A293"/>
<dbReference type="BioCyc" id="SENT99287:STM2385-MONOMER"/>
<dbReference type="Proteomes" id="UP000001014">
    <property type="component" value="Chromosome"/>
</dbReference>
<dbReference type="GO" id="GO:0005829">
    <property type="term" value="C:cytosol"/>
    <property type="evidence" value="ECO:0000318"/>
    <property type="project" value="GO_Central"/>
</dbReference>
<dbReference type="GO" id="GO:0003676">
    <property type="term" value="F:nucleic acid binding"/>
    <property type="evidence" value="ECO:0007669"/>
    <property type="project" value="InterPro"/>
</dbReference>
<dbReference type="GO" id="GO:0036009">
    <property type="term" value="F:protein-glutamine N-methyltransferase activity"/>
    <property type="evidence" value="ECO:0000318"/>
    <property type="project" value="GO_Central"/>
</dbReference>
<dbReference type="GO" id="GO:0032259">
    <property type="term" value="P:methylation"/>
    <property type="evidence" value="ECO:0007669"/>
    <property type="project" value="UniProtKB-KW"/>
</dbReference>
<dbReference type="CDD" id="cd02440">
    <property type="entry name" value="AdoMet_MTases"/>
    <property type="match status" value="1"/>
</dbReference>
<dbReference type="FunFam" id="1.10.8.10:FF:000022">
    <property type="entry name" value="50S ribosomal protein L3 glutamine methyltransferase"/>
    <property type="match status" value="1"/>
</dbReference>
<dbReference type="FunFam" id="3.40.50.150:FF:000042">
    <property type="entry name" value="50S ribosomal protein L3 glutamine methyltransferase"/>
    <property type="match status" value="1"/>
</dbReference>
<dbReference type="Gene3D" id="1.10.8.10">
    <property type="entry name" value="DNA helicase RuvA subunit, C-terminal domain"/>
    <property type="match status" value="1"/>
</dbReference>
<dbReference type="Gene3D" id="3.40.50.150">
    <property type="entry name" value="Vaccinia Virus protein VP39"/>
    <property type="match status" value="1"/>
</dbReference>
<dbReference type="HAMAP" id="MF_02125">
    <property type="entry name" value="L3_methyltr_PrmB"/>
    <property type="match status" value="1"/>
</dbReference>
<dbReference type="InterPro" id="IPR002052">
    <property type="entry name" value="DNA_methylase_N6_adenine_CS"/>
</dbReference>
<dbReference type="InterPro" id="IPR004556">
    <property type="entry name" value="HemK-like"/>
</dbReference>
<dbReference type="InterPro" id="IPR017127">
    <property type="entry name" value="Ribosome_uL3_MTase"/>
</dbReference>
<dbReference type="InterPro" id="IPR029063">
    <property type="entry name" value="SAM-dependent_MTases_sf"/>
</dbReference>
<dbReference type="InterPro" id="IPR007848">
    <property type="entry name" value="Small_mtfrase_dom"/>
</dbReference>
<dbReference type="NCBIfam" id="TIGR00536">
    <property type="entry name" value="hemK_fam"/>
    <property type="match status" value="1"/>
</dbReference>
<dbReference type="NCBIfam" id="TIGR03533">
    <property type="entry name" value="L3_gln_methyl"/>
    <property type="match status" value="1"/>
</dbReference>
<dbReference type="PANTHER" id="PTHR47806">
    <property type="entry name" value="50S RIBOSOMAL PROTEIN L3 GLUTAMINE METHYLTRANSFERASE"/>
    <property type="match status" value="1"/>
</dbReference>
<dbReference type="PANTHER" id="PTHR47806:SF1">
    <property type="entry name" value="RIBOSOMAL PROTEIN UL3 GLUTAMINE METHYLTRANSFERASE"/>
    <property type="match status" value="1"/>
</dbReference>
<dbReference type="Pfam" id="PF05175">
    <property type="entry name" value="MTS"/>
    <property type="match status" value="1"/>
</dbReference>
<dbReference type="PIRSF" id="PIRSF037167">
    <property type="entry name" value="Mtase_YfcB_prd"/>
    <property type="match status" value="1"/>
</dbReference>
<dbReference type="SUPFAM" id="SSF53335">
    <property type="entry name" value="S-adenosyl-L-methionine-dependent methyltransferases"/>
    <property type="match status" value="1"/>
</dbReference>
<name>PRMB_SALTY</name>
<evidence type="ECO:0000255" key="1">
    <source>
        <dbReference type="HAMAP-Rule" id="MF_02125"/>
    </source>
</evidence>
<keyword id="KW-0489">Methyltransferase</keyword>
<keyword id="KW-1185">Reference proteome</keyword>
<keyword id="KW-0949">S-adenosyl-L-methionine</keyword>
<keyword id="KW-0808">Transferase</keyword>
<feature type="chain" id="PRO_0000088005" description="Ribosomal protein uL3 glutamine methyltransferase">
    <location>
        <begin position="1"/>
        <end position="310"/>
    </location>
</feature>
<comment type="function">
    <text evidence="1">Specifically methylates large ribosomal subunit protein uL3 on 'Gln-150'.</text>
</comment>
<comment type="catalytic activity">
    <reaction evidence="1">
        <text>L-glutaminyl-[ribosomal protein uL3] + S-adenosyl-L-methionine = N(5)-methyl-L-glutaminyl-[ribosomal protein uL3] + S-adenosyl-L-homocysteine + H(+)</text>
        <dbReference type="Rhea" id="RHEA:45020"/>
        <dbReference type="Rhea" id="RHEA-COMP:11063"/>
        <dbReference type="Rhea" id="RHEA-COMP:11064"/>
        <dbReference type="ChEBI" id="CHEBI:15378"/>
        <dbReference type="ChEBI" id="CHEBI:30011"/>
        <dbReference type="ChEBI" id="CHEBI:57856"/>
        <dbReference type="ChEBI" id="CHEBI:59789"/>
        <dbReference type="ChEBI" id="CHEBI:61891"/>
        <dbReference type="EC" id="2.1.1.298"/>
    </reaction>
</comment>
<comment type="similarity">
    <text evidence="1">Belongs to the protein N5-glutamine methyltransferase family. PrmB subfamily.</text>
</comment>
<protein>
    <recommendedName>
        <fullName evidence="1">Ribosomal protein uL3 glutamine methyltransferase</fullName>
        <shortName evidence="1">uL3 MTase</shortName>
        <ecNumber evidence="1">2.1.1.298</ecNumber>
    </recommendedName>
    <alternativeName>
        <fullName evidence="1">N5-glutamine methyltransferase PrmB</fullName>
    </alternativeName>
</protein>
<proteinExistence type="inferred from homology"/>
<organism>
    <name type="scientific">Salmonella typhimurium (strain LT2 / SGSC1412 / ATCC 700720)</name>
    <dbReference type="NCBI Taxonomy" id="99287"/>
    <lineage>
        <taxon>Bacteria</taxon>
        <taxon>Pseudomonadati</taxon>
        <taxon>Pseudomonadota</taxon>
        <taxon>Gammaproteobacteria</taxon>
        <taxon>Enterobacterales</taxon>
        <taxon>Enterobacteriaceae</taxon>
        <taxon>Salmonella</taxon>
    </lineage>
</organism>
<sequence length="310" mass="35064">MDKIFVDEAVSELHTIQDMLRWAVSRFSAANIWYGHGTDNPWDEAVQLVLPSLYLPLDIPEDMRTARLTSSEKHRIVERVIRRINERIPVAYLTNKAWFCGHEFYVDERVLVPRSPIGELINNHFAGLISQQPKYILDMCTGSGCIAIACAYAFPDAEVDAVDISPDALAVAEHNIEEHGLIHHVTPIRSDLFRDLPKVQYDLIVTNPPYVDAEDMSDLPNEYRHEPELGLASGTDGLKLTRRILGNAPDYLSDDGVLICEVGNSMVHLMEQYPDVPFTWLEFDNGGDGVFMLTKAQLLAAREHFNIYKD</sequence>
<accession>P0A293</accession>
<accession>P39201</accession>
<gene>
    <name evidence="1" type="primary">prmB</name>
    <name type="synonym">yfcB</name>
    <name type="ordered locus">STM2385</name>
</gene>